<protein>
    <recommendedName>
        <fullName>Uncharacterized protein ycf92</fullName>
    </recommendedName>
</protein>
<organism>
    <name type="scientific">Porphyra purpurea</name>
    <name type="common">Red seaweed</name>
    <name type="synonym">Ulva purpurea</name>
    <dbReference type="NCBI Taxonomy" id="2787"/>
    <lineage>
        <taxon>Eukaryota</taxon>
        <taxon>Rhodophyta</taxon>
        <taxon>Bangiophyceae</taxon>
        <taxon>Bangiales</taxon>
        <taxon>Bangiaceae</taxon>
        <taxon>Porphyra</taxon>
    </lineage>
</organism>
<evidence type="ECO:0000255" key="1"/>
<evidence type="ECO:0000305" key="2"/>
<name>YCF92_PORPU</name>
<comment type="subcellular location">
    <subcellularLocation>
        <location evidence="2">Plastid</location>
        <location evidence="2">Chloroplast membrane</location>
        <topology evidence="2">Multi-pass membrane protein</topology>
    </subcellularLocation>
</comment>
<comment type="similarity">
    <text evidence="2">Belongs to the ycf92 family.</text>
</comment>
<dbReference type="EMBL" id="U38804">
    <property type="protein sequence ID" value="AAC08125.1"/>
    <property type="molecule type" value="Genomic_DNA"/>
</dbReference>
<dbReference type="PIR" id="S73160">
    <property type="entry name" value="S73160"/>
</dbReference>
<dbReference type="GO" id="GO:0031969">
    <property type="term" value="C:chloroplast membrane"/>
    <property type="evidence" value="ECO:0007669"/>
    <property type="project" value="UniProtKB-SubCell"/>
</dbReference>
<dbReference type="GO" id="GO:0005886">
    <property type="term" value="C:plasma membrane"/>
    <property type="evidence" value="ECO:0007669"/>
    <property type="project" value="TreeGrafter"/>
</dbReference>
<dbReference type="PANTHER" id="PTHR33514">
    <property type="entry name" value="PROTEIN ABCI12, CHLOROPLASTIC"/>
    <property type="match status" value="1"/>
</dbReference>
<dbReference type="PANTHER" id="PTHR33514:SF13">
    <property type="entry name" value="PROTEIN ABCI12, CHLOROPLASTIC"/>
    <property type="match status" value="1"/>
</dbReference>
<gene>
    <name type="primary">ycf92</name>
</gene>
<reference key="1">
    <citation type="journal article" date="1995" name="Plant Mol. Biol. Rep.">
        <title>Complete nucleotide sequence of the Porphyra purpurea chloroplast genome.</title>
        <authorList>
            <person name="Reith M.E."/>
            <person name="Munholland J."/>
        </authorList>
    </citation>
    <scope>NUCLEOTIDE SEQUENCE [LARGE SCALE GENOMIC DNA]</scope>
    <source>
        <strain>Avonport</strain>
    </source>
</reference>
<sequence>MSKFELIPYRLYLSQSRTWMHKIKAEVKIYVLLLLWISFFILSYRKLLIVAFSLIITSSTIKCNQYIVKKHFAQTLVMGIAAIMFSFSITNSYQYNLKKEQYRSISSSLAQKTIQRYTPKQITHFNNQISEKLLFAIKPGSYFFITIYSIKLVMITTSSENLALSIYKTKIVNQIFNNELLFIFLLSSHIFNNIVVKMEKITQIISLRGSLNLLKHSTGIFTLFFLISKLFFSEIIKESTEISQSLYTRNLNQENDNFLKIYTSQIRTNDYICLFICTTYVTILFLS</sequence>
<accession>P51239</accession>
<proteinExistence type="inferred from homology"/>
<feature type="chain" id="PRO_0000217479" description="Uncharacterized protein ycf92">
    <location>
        <begin position="1"/>
        <end position="287"/>
    </location>
</feature>
<feature type="transmembrane region" description="Helical" evidence="1">
    <location>
        <begin position="32"/>
        <end position="52"/>
    </location>
</feature>
<feature type="transmembrane region" description="Helical" evidence="1">
    <location>
        <begin position="72"/>
        <end position="92"/>
    </location>
</feature>
<feature type="transmembrane region" description="Helical" evidence="1">
    <location>
        <begin position="133"/>
        <end position="153"/>
    </location>
</feature>
<feature type="transmembrane region" description="Helical" evidence="1">
    <location>
        <begin position="175"/>
        <end position="195"/>
    </location>
</feature>
<feature type="transmembrane region" description="Helical" evidence="1">
    <location>
        <begin position="216"/>
        <end position="236"/>
    </location>
</feature>
<feature type="transmembrane region" description="Helical" evidence="1">
    <location>
        <begin position="266"/>
        <end position="286"/>
    </location>
</feature>
<keyword id="KW-0150">Chloroplast</keyword>
<keyword id="KW-0472">Membrane</keyword>
<keyword id="KW-0934">Plastid</keyword>
<keyword id="KW-0812">Transmembrane</keyword>
<keyword id="KW-1133">Transmembrane helix</keyword>
<geneLocation type="chloroplast"/>